<protein>
    <recommendedName>
        <fullName evidence="1">UPF0102 protein Lxx14785</fullName>
    </recommendedName>
</protein>
<accession>Q6AEA8</accession>
<evidence type="ECO:0000255" key="1">
    <source>
        <dbReference type="HAMAP-Rule" id="MF_00048"/>
    </source>
</evidence>
<keyword id="KW-1185">Reference proteome</keyword>
<proteinExistence type="inferred from homology"/>
<feature type="chain" id="PRO_0000167358" description="UPF0102 protein Lxx14785">
    <location>
        <begin position="1"/>
        <end position="118"/>
    </location>
</feature>
<name>Y1478_LEIXX</name>
<organism>
    <name type="scientific">Leifsonia xyli subsp. xyli (strain CTCB07)</name>
    <dbReference type="NCBI Taxonomy" id="281090"/>
    <lineage>
        <taxon>Bacteria</taxon>
        <taxon>Bacillati</taxon>
        <taxon>Actinomycetota</taxon>
        <taxon>Actinomycetes</taxon>
        <taxon>Micrococcales</taxon>
        <taxon>Microbacteriaceae</taxon>
        <taxon>Leifsonia</taxon>
    </lineage>
</organism>
<comment type="similarity">
    <text evidence="1">Belongs to the UPF0102 family.</text>
</comment>
<sequence>MAKKDELGRRGESVAAHWLEAHGYVLIGRNWRIRSGEIDIIARTGNITVFVEVKTRATTHYGHPLEAITPEKAARLRRLTAEWCRTYGPLPGALRVDAIGVLNAWSANPEIHHLPGIV</sequence>
<reference key="1">
    <citation type="journal article" date="2004" name="Mol. Plant Microbe Interact.">
        <title>The genome sequence of the Gram-positive sugarcane pathogen Leifsonia xyli subsp. xyli.</title>
        <authorList>
            <person name="Monteiro-Vitorello C.B."/>
            <person name="Camargo L.E.A."/>
            <person name="Van Sluys M.A."/>
            <person name="Kitajima J.P."/>
            <person name="Truffi D."/>
            <person name="do Amaral A.M."/>
            <person name="Harakava R."/>
            <person name="de Oliveira J.C.F."/>
            <person name="Wood D."/>
            <person name="de Oliveira M.C."/>
            <person name="Miyaki C.Y."/>
            <person name="Takita M.A."/>
            <person name="da Silva A.C.R."/>
            <person name="Furlan L.R."/>
            <person name="Carraro D.M."/>
            <person name="Camarotte G."/>
            <person name="Almeida N.F. Jr."/>
            <person name="Carrer H."/>
            <person name="Coutinho L.L."/>
            <person name="El-Dorry H.A."/>
            <person name="Ferro M.I.T."/>
            <person name="Gagliardi P.R."/>
            <person name="Giglioti E."/>
            <person name="Goldman M.H.S."/>
            <person name="Goldman G.H."/>
            <person name="Kimura E.T."/>
            <person name="Ferro E.S."/>
            <person name="Kuramae E.E."/>
            <person name="Lemos E.G.M."/>
            <person name="Lemos M.V.F."/>
            <person name="Mauro S.M.Z."/>
            <person name="Machado M.A."/>
            <person name="Marino C.L."/>
            <person name="Menck C.F."/>
            <person name="Nunes L.R."/>
            <person name="Oliveira R.C."/>
            <person name="Pereira G.G."/>
            <person name="Siqueira W."/>
            <person name="de Souza A.A."/>
            <person name="Tsai S.M."/>
            <person name="Zanca A.S."/>
            <person name="Simpson A.J.G."/>
            <person name="Brumbley S.M."/>
            <person name="Setubal J.C."/>
        </authorList>
    </citation>
    <scope>NUCLEOTIDE SEQUENCE [LARGE SCALE GENOMIC DNA]</scope>
    <source>
        <strain>CTCB07</strain>
    </source>
</reference>
<gene>
    <name type="ordered locus">Lxx14785</name>
</gene>
<dbReference type="EMBL" id="AE016822">
    <property type="protein sequence ID" value="AAT89288.1"/>
    <property type="molecule type" value="Genomic_DNA"/>
</dbReference>
<dbReference type="RefSeq" id="WP_011186279.1">
    <property type="nucleotide sequence ID" value="NC_006087.1"/>
</dbReference>
<dbReference type="SMR" id="Q6AEA8"/>
<dbReference type="STRING" id="281090.Lxx14785"/>
<dbReference type="KEGG" id="lxx:Lxx14785"/>
<dbReference type="eggNOG" id="COG0792">
    <property type="taxonomic scope" value="Bacteria"/>
</dbReference>
<dbReference type="HOGENOM" id="CLU_115353_2_3_11"/>
<dbReference type="Proteomes" id="UP000001306">
    <property type="component" value="Chromosome"/>
</dbReference>
<dbReference type="GO" id="GO:0003676">
    <property type="term" value="F:nucleic acid binding"/>
    <property type="evidence" value="ECO:0007669"/>
    <property type="project" value="InterPro"/>
</dbReference>
<dbReference type="CDD" id="cd20736">
    <property type="entry name" value="PoNe_Nuclease"/>
    <property type="match status" value="1"/>
</dbReference>
<dbReference type="Gene3D" id="3.40.1350.10">
    <property type="match status" value="1"/>
</dbReference>
<dbReference type="HAMAP" id="MF_00048">
    <property type="entry name" value="UPF0102"/>
    <property type="match status" value="1"/>
</dbReference>
<dbReference type="InterPro" id="IPR011335">
    <property type="entry name" value="Restrct_endonuc-II-like"/>
</dbReference>
<dbReference type="InterPro" id="IPR011856">
    <property type="entry name" value="tRNA_endonuc-like_dom_sf"/>
</dbReference>
<dbReference type="InterPro" id="IPR003509">
    <property type="entry name" value="UPF0102_YraN-like"/>
</dbReference>
<dbReference type="NCBIfam" id="NF009150">
    <property type="entry name" value="PRK12497.1-3"/>
    <property type="match status" value="1"/>
</dbReference>
<dbReference type="NCBIfam" id="NF009154">
    <property type="entry name" value="PRK12497.3-3"/>
    <property type="match status" value="1"/>
</dbReference>
<dbReference type="PANTHER" id="PTHR34039">
    <property type="entry name" value="UPF0102 PROTEIN YRAN"/>
    <property type="match status" value="1"/>
</dbReference>
<dbReference type="PANTHER" id="PTHR34039:SF1">
    <property type="entry name" value="UPF0102 PROTEIN YRAN"/>
    <property type="match status" value="1"/>
</dbReference>
<dbReference type="Pfam" id="PF02021">
    <property type="entry name" value="UPF0102"/>
    <property type="match status" value="1"/>
</dbReference>
<dbReference type="SUPFAM" id="SSF52980">
    <property type="entry name" value="Restriction endonuclease-like"/>
    <property type="match status" value="1"/>
</dbReference>